<organism>
    <name type="scientific">Ectopseudomonas mendocina (strain ymp)</name>
    <name type="common">Pseudomonas mendocina</name>
    <dbReference type="NCBI Taxonomy" id="399739"/>
    <lineage>
        <taxon>Bacteria</taxon>
        <taxon>Pseudomonadati</taxon>
        <taxon>Pseudomonadota</taxon>
        <taxon>Gammaproteobacteria</taxon>
        <taxon>Pseudomonadales</taxon>
        <taxon>Pseudomonadaceae</taxon>
        <taxon>Ectopseudomonas</taxon>
    </lineage>
</organism>
<keyword id="KW-0488">Methylation</keyword>
<keyword id="KW-0687">Ribonucleoprotein</keyword>
<keyword id="KW-0689">Ribosomal protein</keyword>
<keyword id="KW-0694">RNA-binding</keyword>
<keyword id="KW-0699">rRNA-binding</keyword>
<feature type="chain" id="PRO_1000052115" description="Large ribosomal subunit protein uL3">
    <location>
        <begin position="1"/>
        <end position="209"/>
    </location>
</feature>
<feature type="modified residue" description="N5-methylglutamine" evidence="1">
    <location>
        <position position="150"/>
    </location>
</feature>
<comment type="function">
    <text evidence="1">One of the primary rRNA binding proteins, it binds directly near the 3'-end of the 23S rRNA, where it nucleates assembly of the 50S subunit.</text>
</comment>
<comment type="subunit">
    <text evidence="1">Part of the 50S ribosomal subunit. Forms a cluster with proteins L14 and L19.</text>
</comment>
<comment type="PTM">
    <text evidence="1">Methylated by PrmB.</text>
</comment>
<comment type="similarity">
    <text evidence="1">Belongs to the universal ribosomal protein uL3 family.</text>
</comment>
<sequence length="209" mass="22436">MTIGVVGRKCGMTRIFTEEGVSIPVTVIEIEPNRVTQFKNEESDGYRAVQVTVGERRASRVSKAQAGHFAKANVAAGRTVMEFRLEEGDYQAGDLINAEIFQAGQLVDVTGQSKGKGFAGTIKRWNFRGQDNTHGNSVSHRVPGSIGQCQTPGRVFKGKKMSGHMGAERVTVQSLEVVRVDAERNLLLVKGAVPGATGGDVIVRPAVKA</sequence>
<accession>A4XZ90</accession>
<protein>
    <recommendedName>
        <fullName evidence="1">Large ribosomal subunit protein uL3</fullName>
    </recommendedName>
    <alternativeName>
        <fullName evidence="2">50S ribosomal protein L3</fullName>
    </alternativeName>
</protein>
<reference key="1">
    <citation type="submission" date="2007-04" db="EMBL/GenBank/DDBJ databases">
        <title>Complete sequence of Pseudomonas mendocina ymp.</title>
        <authorList>
            <consortium name="US DOE Joint Genome Institute"/>
            <person name="Copeland A."/>
            <person name="Lucas S."/>
            <person name="Lapidus A."/>
            <person name="Barry K."/>
            <person name="Glavina del Rio T."/>
            <person name="Dalin E."/>
            <person name="Tice H."/>
            <person name="Pitluck S."/>
            <person name="Kiss H."/>
            <person name="Brettin T."/>
            <person name="Detter J.C."/>
            <person name="Bruce D."/>
            <person name="Han C."/>
            <person name="Schmutz J."/>
            <person name="Larimer F."/>
            <person name="Land M."/>
            <person name="Hauser L."/>
            <person name="Kyrpides N."/>
            <person name="Mikhailova N."/>
            <person name="Hersman L."/>
            <person name="Dubois J."/>
            <person name="Maurice P."/>
            <person name="Richardson P."/>
        </authorList>
    </citation>
    <scope>NUCLEOTIDE SEQUENCE [LARGE SCALE GENOMIC DNA]</scope>
    <source>
        <strain>ymp</strain>
    </source>
</reference>
<dbReference type="EMBL" id="CP000680">
    <property type="protein sequence ID" value="ABP86656.1"/>
    <property type="molecule type" value="Genomic_DNA"/>
</dbReference>
<dbReference type="SMR" id="A4XZ90"/>
<dbReference type="STRING" id="399739.Pmen_3909"/>
<dbReference type="KEGG" id="pmy:Pmen_3909"/>
<dbReference type="PATRIC" id="fig|399739.8.peg.3962"/>
<dbReference type="eggNOG" id="COG0087">
    <property type="taxonomic scope" value="Bacteria"/>
</dbReference>
<dbReference type="HOGENOM" id="CLU_044142_4_1_6"/>
<dbReference type="OrthoDB" id="9806135at2"/>
<dbReference type="GO" id="GO:0022625">
    <property type="term" value="C:cytosolic large ribosomal subunit"/>
    <property type="evidence" value="ECO:0007669"/>
    <property type="project" value="TreeGrafter"/>
</dbReference>
<dbReference type="GO" id="GO:0019843">
    <property type="term" value="F:rRNA binding"/>
    <property type="evidence" value="ECO:0007669"/>
    <property type="project" value="UniProtKB-UniRule"/>
</dbReference>
<dbReference type="GO" id="GO:0003735">
    <property type="term" value="F:structural constituent of ribosome"/>
    <property type="evidence" value="ECO:0007669"/>
    <property type="project" value="InterPro"/>
</dbReference>
<dbReference type="GO" id="GO:0006412">
    <property type="term" value="P:translation"/>
    <property type="evidence" value="ECO:0007669"/>
    <property type="project" value="UniProtKB-UniRule"/>
</dbReference>
<dbReference type="FunFam" id="2.40.30.10:FF:000004">
    <property type="entry name" value="50S ribosomal protein L3"/>
    <property type="match status" value="1"/>
</dbReference>
<dbReference type="FunFam" id="3.30.160.810:FF:000001">
    <property type="entry name" value="50S ribosomal protein L3"/>
    <property type="match status" value="1"/>
</dbReference>
<dbReference type="Gene3D" id="3.30.160.810">
    <property type="match status" value="1"/>
</dbReference>
<dbReference type="Gene3D" id="2.40.30.10">
    <property type="entry name" value="Translation factors"/>
    <property type="match status" value="1"/>
</dbReference>
<dbReference type="HAMAP" id="MF_01325_B">
    <property type="entry name" value="Ribosomal_uL3_B"/>
    <property type="match status" value="1"/>
</dbReference>
<dbReference type="InterPro" id="IPR000597">
    <property type="entry name" value="Ribosomal_uL3"/>
</dbReference>
<dbReference type="InterPro" id="IPR019927">
    <property type="entry name" value="Ribosomal_uL3_bac/org-type"/>
</dbReference>
<dbReference type="InterPro" id="IPR019926">
    <property type="entry name" value="Ribosomal_uL3_CS"/>
</dbReference>
<dbReference type="InterPro" id="IPR009000">
    <property type="entry name" value="Transl_B-barrel_sf"/>
</dbReference>
<dbReference type="NCBIfam" id="TIGR03625">
    <property type="entry name" value="L3_bact"/>
    <property type="match status" value="1"/>
</dbReference>
<dbReference type="PANTHER" id="PTHR11229">
    <property type="entry name" value="50S RIBOSOMAL PROTEIN L3"/>
    <property type="match status" value="1"/>
</dbReference>
<dbReference type="PANTHER" id="PTHR11229:SF16">
    <property type="entry name" value="LARGE RIBOSOMAL SUBUNIT PROTEIN UL3C"/>
    <property type="match status" value="1"/>
</dbReference>
<dbReference type="Pfam" id="PF00297">
    <property type="entry name" value="Ribosomal_L3"/>
    <property type="match status" value="1"/>
</dbReference>
<dbReference type="SUPFAM" id="SSF50447">
    <property type="entry name" value="Translation proteins"/>
    <property type="match status" value="1"/>
</dbReference>
<dbReference type="PROSITE" id="PS00474">
    <property type="entry name" value="RIBOSOMAL_L3"/>
    <property type="match status" value="1"/>
</dbReference>
<gene>
    <name evidence="1" type="primary">rplC</name>
    <name type="ordered locus">Pmen_3909</name>
</gene>
<proteinExistence type="inferred from homology"/>
<evidence type="ECO:0000255" key="1">
    <source>
        <dbReference type="HAMAP-Rule" id="MF_01325"/>
    </source>
</evidence>
<evidence type="ECO:0000305" key="2"/>
<name>RL3_ECTM1</name>